<name>GCS2_NITMU</name>
<sequence>MSLMPFAPSRPLSIGVELELQLLGCNDYNLAPSAPEILRRVAKRTHPGEIKPEMTRSMIEINTSVQQEYAGLVTELRALRDVVSEAGCFLNVAVAGGGTHPFQHWSEQKIFDAPRFHYLSELYGYLAKQFTIFGQHVHIGCPGPDEALHLTHMLSRYIPHFIALSASSPFVQGHDTGFASARLNSVFSFPLSGRAPFVLRWNDFEKFFAKMTGTGVVESMKDFYWDIRPKPEFGTIEVRVCDTPLTVEIAASIACYIQAMSRYIMVEQRMAPEEDDYLVYTFNRFQACRFGLEGVFIDPRTHQQRSIREDIMEMLEHISDHARELHAVEAMERIREILIVGNGTSWQRRAYASEHNLADVMQLQAELWMGN</sequence>
<reference key="1">
    <citation type="submission" date="2005-08" db="EMBL/GenBank/DDBJ databases">
        <title>Complete sequence of chromosome 1 of Nitrosospira multiformis ATCC 25196.</title>
        <authorList>
            <person name="Copeland A."/>
            <person name="Lucas S."/>
            <person name="Lapidus A."/>
            <person name="Barry K."/>
            <person name="Detter J.C."/>
            <person name="Glavina T."/>
            <person name="Hammon N."/>
            <person name="Israni S."/>
            <person name="Pitluck S."/>
            <person name="Chain P."/>
            <person name="Malfatti S."/>
            <person name="Shin M."/>
            <person name="Vergez L."/>
            <person name="Schmutz J."/>
            <person name="Larimer F."/>
            <person name="Land M."/>
            <person name="Hauser L."/>
            <person name="Kyrpides N."/>
            <person name="Lykidis A."/>
            <person name="Richardson P."/>
        </authorList>
    </citation>
    <scope>NUCLEOTIDE SEQUENCE [LARGE SCALE GENOMIC DNA]</scope>
    <source>
        <strain>ATCC 25196 / NCIMB 11849 / C 71</strain>
    </source>
</reference>
<evidence type="ECO:0000255" key="1">
    <source>
        <dbReference type="HAMAP-Rule" id="MF_01609"/>
    </source>
</evidence>
<keyword id="KW-0067">ATP-binding</keyword>
<keyword id="KW-0436">Ligase</keyword>
<keyword id="KW-0547">Nucleotide-binding</keyword>
<keyword id="KW-1185">Reference proteome</keyword>
<feature type="chain" id="PRO_0000255804" description="Putative glutamate--cysteine ligase 2">
    <location>
        <begin position="1"/>
        <end position="371"/>
    </location>
</feature>
<organism>
    <name type="scientific">Nitrosospira multiformis (strain ATCC 25196 / NCIMB 11849 / C 71)</name>
    <dbReference type="NCBI Taxonomy" id="323848"/>
    <lineage>
        <taxon>Bacteria</taxon>
        <taxon>Pseudomonadati</taxon>
        <taxon>Pseudomonadota</taxon>
        <taxon>Betaproteobacteria</taxon>
        <taxon>Nitrosomonadales</taxon>
        <taxon>Nitrosomonadaceae</taxon>
        <taxon>Nitrosospira</taxon>
    </lineage>
</organism>
<gene>
    <name type="ordered locus">Nmul_A1548</name>
</gene>
<comment type="function">
    <text evidence="1">ATP-dependent carboxylate-amine ligase which exhibits weak glutamate--cysteine ligase activity.</text>
</comment>
<comment type="catalytic activity">
    <reaction evidence="1">
        <text>L-cysteine + L-glutamate + ATP = gamma-L-glutamyl-L-cysteine + ADP + phosphate + H(+)</text>
        <dbReference type="Rhea" id="RHEA:13285"/>
        <dbReference type="ChEBI" id="CHEBI:15378"/>
        <dbReference type="ChEBI" id="CHEBI:29985"/>
        <dbReference type="ChEBI" id="CHEBI:30616"/>
        <dbReference type="ChEBI" id="CHEBI:35235"/>
        <dbReference type="ChEBI" id="CHEBI:43474"/>
        <dbReference type="ChEBI" id="CHEBI:58173"/>
        <dbReference type="ChEBI" id="CHEBI:456216"/>
        <dbReference type="EC" id="6.3.2.2"/>
    </reaction>
</comment>
<comment type="similarity">
    <text evidence="1">Belongs to the glutamate--cysteine ligase type 2 family. YbdK subfamily.</text>
</comment>
<proteinExistence type="inferred from homology"/>
<accession>Q2Y8S0</accession>
<protein>
    <recommendedName>
        <fullName evidence="1">Putative glutamate--cysteine ligase 2</fullName>
        <ecNumber evidence="1">6.3.2.2</ecNumber>
    </recommendedName>
    <alternativeName>
        <fullName evidence="1">Gamma-glutamylcysteine synthetase 2</fullName>
        <shortName evidence="1">GCS 2</shortName>
        <shortName evidence="1">Gamma-GCS 2</shortName>
    </alternativeName>
</protein>
<dbReference type="EC" id="6.3.2.2" evidence="1"/>
<dbReference type="EMBL" id="CP000103">
    <property type="protein sequence ID" value="ABB74851.1"/>
    <property type="molecule type" value="Genomic_DNA"/>
</dbReference>
<dbReference type="RefSeq" id="WP_011380880.1">
    <property type="nucleotide sequence ID" value="NC_007614.1"/>
</dbReference>
<dbReference type="SMR" id="Q2Y8S0"/>
<dbReference type="STRING" id="323848.Nmul_A1548"/>
<dbReference type="KEGG" id="nmu:Nmul_A1548"/>
<dbReference type="eggNOG" id="COG2170">
    <property type="taxonomic scope" value="Bacteria"/>
</dbReference>
<dbReference type="HOGENOM" id="CLU_044848_1_1_4"/>
<dbReference type="OrthoDB" id="9769628at2"/>
<dbReference type="Proteomes" id="UP000002718">
    <property type="component" value="Chromosome"/>
</dbReference>
<dbReference type="GO" id="GO:0005524">
    <property type="term" value="F:ATP binding"/>
    <property type="evidence" value="ECO:0007669"/>
    <property type="project" value="UniProtKB-KW"/>
</dbReference>
<dbReference type="GO" id="GO:0004357">
    <property type="term" value="F:glutamate-cysteine ligase activity"/>
    <property type="evidence" value="ECO:0007669"/>
    <property type="project" value="UniProtKB-EC"/>
</dbReference>
<dbReference type="GO" id="GO:0042398">
    <property type="term" value="P:modified amino acid biosynthetic process"/>
    <property type="evidence" value="ECO:0007669"/>
    <property type="project" value="InterPro"/>
</dbReference>
<dbReference type="Gene3D" id="3.30.590.20">
    <property type="match status" value="1"/>
</dbReference>
<dbReference type="HAMAP" id="MF_01609">
    <property type="entry name" value="Glu_cys_ligase_2"/>
    <property type="match status" value="1"/>
</dbReference>
<dbReference type="InterPro" id="IPR050141">
    <property type="entry name" value="GCL_type2/YbdK_subfam"/>
</dbReference>
<dbReference type="InterPro" id="IPR006336">
    <property type="entry name" value="GCS2"/>
</dbReference>
<dbReference type="InterPro" id="IPR014746">
    <property type="entry name" value="Gln_synth/guanido_kin_cat_dom"/>
</dbReference>
<dbReference type="InterPro" id="IPR011793">
    <property type="entry name" value="YbdK"/>
</dbReference>
<dbReference type="NCBIfam" id="TIGR02050">
    <property type="entry name" value="gshA_cyan_rel"/>
    <property type="match status" value="1"/>
</dbReference>
<dbReference type="NCBIfam" id="NF010040">
    <property type="entry name" value="PRK13516.1"/>
    <property type="match status" value="1"/>
</dbReference>
<dbReference type="PANTHER" id="PTHR36510">
    <property type="entry name" value="GLUTAMATE--CYSTEINE LIGASE 2-RELATED"/>
    <property type="match status" value="1"/>
</dbReference>
<dbReference type="PANTHER" id="PTHR36510:SF1">
    <property type="entry name" value="GLUTAMATE--CYSTEINE LIGASE 2-RELATED"/>
    <property type="match status" value="1"/>
</dbReference>
<dbReference type="Pfam" id="PF04107">
    <property type="entry name" value="GCS2"/>
    <property type="match status" value="1"/>
</dbReference>
<dbReference type="SUPFAM" id="SSF55931">
    <property type="entry name" value="Glutamine synthetase/guanido kinase"/>
    <property type="match status" value="1"/>
</dbReference>